<protein>
    <recommendedName>
        <fullName>Inactive serine protease 35</fullName>
    </recommendedName>
</protein>
<proteinExistence type="evidence at transcript level"/>
<feature type="signal peptide" evidence="2">
    <location>
        <begin position="1"/>
        <end position="17"/>
    </location>
</feature>
<feature type="chain" id="PRO_0000299359" description="Inactive serine protease 35">
    <location>
        <begin position="18"/>
        <end position="409"/>
    </location>
</feature>
<feature type="domain" description="Peptidase S1">
    <location>
        <begin position="120"/>
        <end position="404"/>
    </location>
</feature>
<feature type="region of interest" description="Disordered" evidence="3">
    <location>
        <begin position="188"/>
        <end position="246"/>
    </location>
</feature>
<feature type="compositionally biased region" description="Basic residues" evidence="3">
    <location>
        <begin position="188"/>
        <end position="203"/>
    </location>
</feature>
<feature type="compositionally biased region" description="Basic and acidic residues" evidence="3">
    <location>
        <begin position="204"/>
        <end position="224"/>
    </location>
</feature>
<feature type="glycosylation site" description="N-linked (GlcNAc...) asparagine" evidence="2">
    <location>
        <position position="87"/>
    </location>
</feature>
<feature type="glycosylation site" description="N-linked (GlcNAc...) asparagine" evidence="2">
    <location>
        <position position="107"/>
    </location>
</feature>
<feature type="disulfide bond" evidence="1">
    <location>
        <begin position="150"/>
        <end position="166"/>
    </location>
</feature>
<reference key="1">
    <citation type="journal article" date="2006" name="Biol. Reprod.">
        <title>The identification of novel ovarian proteases through the use of genomic and bioinformatic methodologies.</title>
        <authorList>
            <person name="Miyakoshi K."/>
            <person name="Murphy M.J."/>
            <person name="Yeoman R.R."/>
            <person name="Mitra S."/>
            <person name="Dubay C.J."/>
            <person name="Hennebold J.D."/>
        </authorList>
    </citation>
    <scope>NUCLEOTIDE SEQUENCE [MRNA]</scope>
    <source>
        <tissue>Ovary</tissue>
    </source>
</reference>
<keyword id="KW-1015">Disulfide bond</keyword>
<keyword id="KW-0325">Glycoprotein</keyword>
<keyword id="KW-1185">Reference proteome</keyword>
<keyword id="KW-0964">Secreted</keyword>
<keyword id="KW-0721">Serine protease homolog</keyword>
<keyword id="KW-0732">Signal</keyword>
<name>PRS35_MACMU</name>
<evidence type="ECO:0000250" key="1"/>
<evidence type="ECO:0000255" key="2"/>
<evidence type="ECO:0000256" key="3">
    <source>
        <dbReference type="SAM" id="MobiDB-lite"/>
    </source>
</evidence>
<evidence type="ECO:0000305" key="4"/>
<organism>
    <name type="scientific">Macaca mulatta</name>
    <name type="common">Rhesus macaque</name>
    <dbReference type="NCBI Taxonomy" id="9544"/>
    <lineage>
        <taxon>Eukaryota</taxon>
        <taxon>Metazoa</taxon>
        <taxon>Chordata</taxon>
        <taxon>Craniata</taxon>
        <taxon>Vertebrata</taxon>
        <taxon>Euteleostomi</taxon>
        <taxon>Mammalia</taxon>
        <taxon>Eutheria</taxon>
        <taxon>Euarchontoglires</taxon>
        <taxon>Primates</taxon>
        <taxon>Haplorrhini</taxon>
        <taxon>Catarrhini</taxon>
        <taxon>Cercopithecidae</taxon>
        <taxon>Cercopithecinae</taxon>
        <taxon>Macaca</taxon>
    </lineage>
</organism>
<sequence>MLLWLIFFTPGWTLIDGSEMQRDFTWHLRKVPRIVSERTFHLTSPTFEADAKMMVNTVCGIECQKELPTPSLSELEDYLSYETVFENGTRTLTRVKVQDLVFEPTQNTTKGASVRRKRQVYGTDSRFSILDKRFLTNFPFSTAVKLSTGCSGILISPQHVLTAAHCVHDGKDYVKGSKKLRVGLLKMRNKSGGKKRRGSKRSRRETSGGDQREGPREHLQDRVKAGRRRKQSGGGQRVSEGRPSFRWTRVKNTHIPKGWARGGMGDAALDYDYALLELKRAHKKKYMELGISPTIKKMPGGMIHFSGFDNDRADQLVYRFCSVSDESNDLLYQYCDAESGSTGSGVYLRLKDPDKKNWKRKIIAVYSGHQWVDVHGVQKDYNVAVRITPLKYAQICLWIHGNDANCAYG</sequence>
<accession>Q1WK24</accession>
<dbReference type="EMBL" id="DQ223038">
    <property type="protein sequence ID" value="ABB46198.1"/>
    <property type="molecule type" value="mRNA"/>
</dbReference>
<dbReference type="RefSeq" id="NP_001041709.1">
    <property type="nucleotide sequence ID" value="NM_001048244.1"/>
</dbReference>
<dbReference type="FunCoup" id="Q1WK24">
    <property type="interactions" value="152"/>
</dbReference>
<dbReference type="MEROPS" id="S01.994"/>
<dbReference type="GlyCosmos" id="Q1WK24">
    <property type="glycosylation" value="2 sites, No reported glycans"/>
</dbReference>
<dbReference type="PaxDb" id="9544-ENSMMUP00000021956"/>
<dbReference type="GeneID" id="695095"/>
<dbReference type="KEGG" id="mcc:695095"/>
<dbReference type="CTD" id="167681"/>
<dbReference type="eggNOG" id="ENOG502QV0K">
    <property type="taxonomic scope" value="Eukaryota"/>
</dbReference>
<dbReference type="InParanoid" id="Q1WK24"/>
<dbReference type="OrthoDB" id="10037376at2759"/>
<dbReference type="Proteomes" id="UP000006718">
    <property type="component" value="Unassembled WGS sequence"/>
</dbReference>
<dbReference type="GO" id="GO:0005576">
    <property type="term" value="C:extracellular region"/>
    <property type="evidence" value="ECO:0007669"/>
    <property type="project" value="UniProtKB-SubCell"/>
</dbReference>
<dbReference type="GO" id="GO:0004252">
    <property type="term" value="F:serine-type endopeptidase activity"/>
    <property type="evidence" value="ECO:0007669"/>
    <property type="project" value="InterPro"/>
</dbReference>
<dbReference type="Gene3D" id="2.40.10.10">
    <property type="entry name" value="Trypsin-like serine proteases"/>
    <property type="match status" value="1"/>
</dbReference>
<dbReference type="InterPro" id="IPR050966">
    <property type="entry name" value="Glutamyl_endopeptidase"/>
</dbReference>
<dbReference type="InterPro" id="IPR009003">
    <property type="entry name" value="Peptidase_S1_PA"/>
</dbReference>
<dbReference type="InterPro" id="IPR043504">
    <property type="entry name" value="Peptidase_S1_PA_chymotrypsin"/>
</dbReference>
<dbReference type="InterPro" id="IPR001254">
    <property type="entry name" value="Trypsin_dom"/>
</dbReference>
<dbReference type="InterPro" id="IPR018114">
    <property type="entry name" value="TRYPSIN_HIS"/>
</dbReference>
<dbReference type="PANTHER" id="PTHR15462:SF17">
    <property type="entry name" value="INACTIVE SERINE PROTEASE 35"/>
    <property type="match status" value="1"/>
</dbReference>
<dbReference type="PANTHER" id="PTHR15462">
    <property type="entry name" value="SERINE PROTEASE"/>
    <property type="match status" value="1"/>
</dbReference>
<dbReference type="Pfam" id="PF00089">
    <property type="entry name" value="Trypsin"/>
    <property type="match status" value="1"/>
</dbReference>
<dbReference type="SUPFAM" id="SSF50494">
    <property type="entry name" value="Trypsin-like serine proteases"/>
    <property type="match status" value="1"/>
</dbReference>
<dbReference type="PROSITE" id="PS00134">
    <property type="entry name" value="TRYPSIN_HIS"/>
    <property type="match status" value="1"/>
</dbReference>
<gene>
    <name type="primary">PRSS35</name>
</gene>
<comment type="subcellular location">
    <subcellularLocation>
        <location evidence="4">Secreted</location>
    </subcellularLocation>
</comment>
<comment type="similarity">
    <text evidence="4">Belongs to the peptidase S1 family.</text>
</comment>
<comment type="caution">
    <text evidence="4">Although related to peptidase S1 family, lacks the conserved active Ser residue in position 342 which is replaced by a Thr, suggesting that it has no protease activity.</text>
</comment>